<proteinExistence type="inferred from homology"/>
<reference key="1">
    <citation type="journal article" date="2005" name="Nat. Biotechnol.">
        <title>Complete genome sequence of the acetic acid bacterium Gluconobacter oxydans.</title>
        <authorList>
            <person name="Prust C."/>
            <person name="Hoffmeister M."/>
            <person name="Liesegang H."/>
            <person name="Wiezer A."/>
            <person name="Fricke W.F."/>
            <person name="Ehrenreich A."/>
            <person name="Gottschalk G."/>
            <person name="Deppenmeier U."/>
        </authorList>
    </citation>
    <scope>NUCLEOTIDE SEQUENCE [LARGE SCALE GENOMIC DNA]</scope>
    <source>
        <strain>621H</strain>
    </source>
</reference>
<accession>Q5FS38</accession>
<gene>
    <name evidence="1" type="primary">hemE</name>
    <name type="ordered locus">GOX1037</name>
</gene>
<name>DCUP_GLUOX</name>
<protein>
    <recommendedName>
        <fullName evidence="1">Uroporphyrinogen decarboxylase</fullName>
        <shortName evidence="1">UPD</shortName>
        <shortName evidence="1">URO-D</shortName>
        <ecNumber evidence="1">4.1.1.37</ecNumber>
    </recommendedName>
</protein>
<keyword id="KW-0963">Cytoplasm</keyword>
<keyword id="KW-0210">Decarboxylase</keyword>
<keyword id="KW-0456">Lyase</keyword>
<keyword id="KW-0627">Porphyrin biosynthesis</keyword>
<keyword id="KW-1185">Reference proteome</keyword>
<evidence type="ECO:0000255" key="1">
    <source>
        <dbReference type="HAMAP-Rule" id="MF_00218"/>
    </source>
</evidence>
<dbReference type="EC" id="4.1.1.37" evidence="1"/>
<dbReference type="EMBL" id="CP000009">
    <property type="protein sequence ID" value="AAW60808.1"/>
    <property type="molecule type" value="Genomic_DNA"/>
</dbReference>
<dbReference type="RefSeq" id="WP_011252600.1">
    <property type="nucleotide sequence ID" value="NZ_LT900338.1"/>
</dbReference>
<dbReference type="SMR" id="Q5FS38"/>
<dbReference type="STRING" id="290633.GOX1037"/>
<dbReference type="KEGG" id="gox:GOX1037"/>
<dbReference type="eggNOG" id="COG0407">
    <property type="taxonomic scope" value="Bacteria"/>
</dbReference>
<dbReference type="HOGENOM" id="CLU_040933_0_0_5"/>
<dbReference type="UniPathway" id="UPA00251">
    <property type="reaction ID" value="UER00321"/>
</dbReference>
<dbReference type="Proteomes" id="UP000006375">
    <property type="component" value="Chromosome"/>
</dbReference>
<dbReference type="GO" id="GO:0005829">
    <property type="term" value="C:cytosol"/>
    <property type="evidence" value="ECO:0007669"/>
    <property type="project" value="TreeGrafter"/>
</dbReference>
<dbReference type="GO" id="GO:0004853">
    <property type="term" value="F:uroporphyrinogen decarboxylase activity"/>
    <property type="evidence" value="ECO:0007669"/>
    <property type="project" value="UniProtKB-UniRule"/>
</dbReference>
<dbReference type="GO" id="GO:0019353">
    <property type="term" value="P:protoporphyrinogen IX biosynthetic process from glutamate"/>
    <property type="evidence" value="ECO:0007669"/>
    <property type="project" value="TreeGrafter"/>
</dbReference>
<dbReference type="CDD" id="cd00717">
    <property type="entry name" value="URO-D"/>
    <property type="match status" value="1"/>
</dbReference>
<dbReference type="Gene3D" id="3.20.20.210">
    <property type="match status" value="1"/>
</dbReference>
<dbReference type="HAMAP" id="MF_00218">
    <property type="entry name" value="URO_D"/>
    <property type="match status" value="1"/>
</dbReference>
<dbReference type="InterPro" id="IPR038071">
    <property type="entry name" value="UROD/MetE-like_sf"/>
</dbReference>
<dbReference type="InterPro" id="IPR006361">
    <property type="entry name" value="Uroporphyrinogen_deCO2ase_HemE"/>
</dbReference>
<dbReference type="InterPro" id="IPR000257">
    <property type="entry name" value="Uroporphyrinogen_deCOase"/>
</dbReference>
<dbReference type="NCBIfam" id="TIGR01464">
    <property type="entry name" value="hemE"/>
    <property type="match status" value="1"/>
</dbReference>
<dbReference type="PANTHER" id="PTHR21091">
    <property type="entry name" value="METHYLTETRAHYDROFOLATE:HOMOCYSTEINE METHYLTRANSFERASE RELATED"/>
    <property type="match status" value="1"/>
</dbReference>
<dbReference type="PANTHER" id="PTHR21091:SF169">
    <property type="entry name" value="UROPORPHYRINOGEN DECARBOXYLASE"/>
    <property type="match status" value="1"/>
</dbReference>
<dbReference type="Pfam" id="PF01208">
    <property type="entry name" value="URO-D"/>
    <property type="match status" value="1"/>
</dbReference>
<dbReference type="SUPFAM" id="SSF51726">
    <property type="entry name" value="UROD/MetE-like"/>
    <property type="match status" value="1"/>
</dbReference>
<dbReference type="PROSITE" id="PS00906">
    <property type="entry name" value="UROD_1"/>
    <property type="match status" value="1"/>
</dbReference>
<dbReference type="PROSITE" id="PS00907">
    <property type="entry name" value="UROD_2"/>
    <property type="match status" value="1"/>
</dbReference>
<feature type="chain" id="PRO_0000325650" description="Uroporphyrinogen decarboxylase">
    <location>
        <begin position="1"/>
        <end position="353"/>
    </location>
</feature>
<feature type="binding site" evidence="1">
    <location>
        <begin position="33"/>
        <end position="37"/>
    </location>
    <ligand>
        <name>substrate</name>
    </ligand>
</feature>
<feature type="binding site" evidence="1">
    <location>
        <position position="82"/>
    </location>
    <ligand>
        <name>substrate</name>
    </ligand>
</feature>
<feature type="binding site" evidence="1">
    <location>
        <position position="158"/>
    </location>
    <ligand>
        <name>substrate</name>
    </ligand>
</feature>
<feature type="binding site" evidence="1">
    <location>
        <position position="213"/>
    </location>
    <ligand>
        <name>substrate</name>
    </ligand>
</feature>
<feature type="binding site" evidence="1">
    <location>
        <position position="332"/>
    </location>
    <ligand>
        <name>substrate</name>
    </ligand>
</feature>
<feature type="site" description="Transition state stabilizer" evidence="1">
    <location>
        <position position="82"/>
    </location>
</feature>
<organism>
    <name type="scientific">Gluconobacter oxydans (strain 621H)</name>
    <name type="common">Gluconobacter suboxydans</name>
    <dbReference type="NCBI Taxonomy" id="290633"/>
    <lineage>
        <taxon>Bacteria</taxon>
        <taxon>Pseudomonadati</taxon>
        <taxon>Pseudomonadota</taxon>
        <taxon>Alphaproteobacteria</taxon>
        <taxon>Acetobacterales</taxon>
        <taxon>Acetobacteraceae</taxon>
        <taxon>Gluconobacter</taxon>
    </lineage>
</organism>
<comment type="function">
    <text evidence="1">Catalyzes the decarboxylation of four acetate groups of uroporphyrinogen-III to yield coproporphyrinogen-III.</text>
</comment>
<comment type="catalytic activity">
    <reaction evidence="1">
        <text>uroporphyrinogen III + 4 H(+) = coproporphyrinogen III + 4 CO2</text>
        <dbReference type="Rhea" id="RHEA:19865"/>
        <dbReference type="ChEBI" id="CHEBI:15378"/>
        <dbReference type="ChEBI" id="CHEBI:16526"/>
        <dbReference type="ChEBI" id="CHEBI:57308"/>
        <dbReference type="ChEBI" id="CHEBI:57309"/>
        <dbReference type="EC" id="4.1.1.37"/>
    </reaction>
</comment>
<comment type="pathway">
    <text evidence="1">Porphyrin-containing compound metabolism; protoporphyrin-IX biosynthesis; coproporphyrinogen-III from 5-aminolevulinate: step 4/4.</text>
</comment>
<comment type="subunit">
    <text evidence="1">Homodimer.</text>
</comment>
<comment type="subcellular location">
    <subcellularLocation>
        <location evidence="1">Cytoplasm</location>
    </subcellularLocation>
</comment>
<comment type="similarity">
    <text evidence="1">Belongs to the uroporphyrinogen decarboxylase family.</text>
</comment>
<sequence length="353" mass="38906">MISENAPSSPSSKPLLRALRGEAVWPPPVWLMRQAGRYLPEFRAMRDRADFLTRCMTPDMATELTIQPIRRYGMDGAILFSDILILPWAMGQSLEFIDGRGPVLGAIRSEADLARLDPKRVQDAVAPVRETLSRLTKELPDVTTLLGFAGSPFTVSCYMVEGGGSRDFAETRRMMQTNPALFDRLIDTLTSSTAEMLCGQIEAGAEAVMLFDSWAGILPPSAFRRYVIEPTRQIVEYIRARHPKTPIIGFPRLGGIMVREYAQKTGVNTLALDTVADPAQISELVSEVRPGLTLQGNMDPMILFSGGETMIREAQAIRDAMRGKPHVFNLGHGVMQHTPPENVAALVEAVRAV</sequence>